<proteinExistence type="inferred from homology"/>
<accession>Q9JVA3</accession>
<accession>A1IQX2</accession>
<name>SYT_NEIMA</name>
<evidence type="ECO:0000255" key="1">
    <source>
        <dbReference type="HAMAP-Rule" id="MF_00184"/>
    </source>
</evidence>
<evidence type="ECO:0000255" key="2">
    <source>
        <dbReference type="PROSITE-ProRule" id="PRU01228"/>
    </source>
</evidence>
<gene>
    <name evidence="1" type="primary">thrS</name>
    <name type="ordered locus">NMA0929</name>
</gene>
<dbReference type="EC" id="6.1.1.3" evidence="1"/>
<dbReference type="EMBL" id="AL157959">
    <property type="protein sequence ID" value="CAM08156.1"/>
    <property type="molecule type" value="Genomic_DNA"/>
</dbReference>
<dbReference type="PIR" id="B81939">
    <property type="entry name" value="B81939"/>
</dbReference>
<dbReference type="RefSeq" id="WP_002246913.1">
    <property type="nucleotide sequence ID" value="NC_003116.1"/>
</dbReference>
<dbReference type="SMR" id="Q9JVA3"/>
<dbReference type="EnsemblBacteria" id="CAM08156">
    <property type="protein sequence ID" value="CAM08156"/>
    <property type="gene ID" value="NMA0929"/>
</dbReference>
<dbReference type="GeneID" id="93386454"/>
<dbReference type="KEGG" id="nma:NMA0929"/>
<dbReference type="HOGENOM" id="CLU_008554_0_1_4"/>
<dbReference type="Proteomes" id="UP000000626">
    <property type="component" value="Chromosome"/>
</dbReference>
<dbReference type="GO" id="GO:0005829">
    <property type="term" value="C:cytosol"/>
    <property type="evidence" value="ECO:0007669"/>
    <property type="project" value="TreeGrafter"/>
</dbReference>
<dbReference type="GO" id="GO:0005524">
    <property type="term" value="F:ATP binding"/>
    <property type="evidence" value="ECO:0007669"/>
    <property type="project" value="UniProtKB-UniRule"/>
</dbReference>
<dbReference type="GO" id="GO:0046872">
    <property type="term" value="F:metal ion binding"/>
    <property type="evidence" value="ECO:0007669"/>
    <property type="project" value="UniProtKB-KW"/>
</dbReference>
<dbReference type="GO" id="GO:0004829">
    <property type="term" value="F:threonine-tRNA ligase activity"/>
    <property type="evidence" value="ECO:0007669"/>
    <property type="project" value="UniProtKB-UniRule"/>
</dbReference>
<dbReference type="GO" id="GO:0000049">
    <property type="term" value="F:tRNA binding"/>
    <property type="evidence" value="ECO:0007669"/>
    <property type="project" value="UniProtKB-KW"/>
</dbReference>
<dbReference type="GO" id="GO:0006435">
    <property type="term" value="P:threonyl-tRNA aminoacylation"/>
    <property type="evidence" value="ECO:0007669"/>
    <property type="project" value="UniProtKB-UniRule"/>
</dbReference>
<dbReference type="CDD" id="cd01667">
    <property type="entry name" value="TGS_ThrRS"/>
    <property type="match status" value="1"/>
</dbReference>
<dbReference type="CDD" id="cd00860">
    <property type="entry name" value="ThrRS_anticodon"/>
    <property type="match status" value="1"/>
</dbReference>
<dbReference type="CDD" id="cd00771">
    <property type="entry name" value="ThrRS_core"/>
    <property type="match status" value="1"/>
</dbReference>
<dbReference type="FunFam" id="3.10.20.30:FF:000005">
    <property type="entry name" value="Threonine--tRNA ligase"/>
    <property type="match status" value="1"/>
</dbReference>
<dbReference type="FunFam" id="3.30.54.20:FF:000002">
    <property type="entry name" value="Threonine--tRNA ligase"/>
    <property type="match status" value="1"/>
</dbReference>
<dbReference type="FunFam" id="3.30.930.10:FF:000002">
    <property type="entry name" value="Threonine--tRNA ligase"/>
    <property type="match status" value="1"/>
</dbReference>
<dbReference type="FunFam" id="3.40.50.800:FF:000001">
    <property type="entry name" value="Threonine--tRNA ligase"/>
    <property type="match status" value="1"/>
</dbReference>
<dbReference type="FunFam" id="3.30.980.10:FF:000005">
    <property type="entry name" value="Threonyl-tRNA synthetase, mitochondrial"/>
    <property type="match status" value="1"/>
</dbReference>
<dbReference type="Gene3D" id="3.10.20.30">
    <property type="match status" value="1"/>
</dbReference>
<dbReference type="Gene3D" id="3.30.54.20">
    <property type="match status" value="1"/>
</dbReference>
<dbReference type="Gene3D" id="3.40.50.800">
    <property type="entry name" value="Anticodon-binding domain"/>
    <property type="match status" value="1"/>
</dbReference>
<dbReference type="Gene3D" id="3.30.930.10">
    <property type="entry name" value="Bira Bifunctional Protein, Domain 2"/>
    <property type="match status" value="1"/>
</dbReference>
<dbReference type="Gene3D" id="3.30.980.10">
    <property type="entry name" value="Threonyl-trna Synthetase, Chain A, domain 2"/>
    <property type="match status" value="1"/>
</dbReference>
<dbReference type="HAMAP" id="MF_00184">
    <property type="entry name" value="Thr_tRNA_synth"/>
    <property type="match status" value="1"/>
</dbReference>
<dbReference type="InterPro" id="IPR002314">
    <property type="entry name" value="aa-tRNA-synt_IIb"/>
</dbReference>
<dbReference type="InterPro" id="IPR006195">
    <property type="entry name" value="aa-tRNA-synth_II"/>
</dbReference>
<dbReference type="InterPro" id="IPR045864">
    <property type="entry name" value="aa-tRNA-synth_II/BPL/LPL"/>
</dbReference>
<dbReference type="InterPro" id="IPR004154">
    <property type="entry name" value="Anticodon-bd"/>
</dbReference>
<dbReference type="InterPro" id="IPR036621">
    <property type="entry name" value="Anticodon-bd_dom_sf"/>
</dbReference>
<dbReference type="InterPro" id="IPR012675">
    <property type="entry name" value="Beta-grasp_dom_sf"/>
</dbReference>
<dbReference type="InterPro" id="IPR004095">
    <property type="entry name" value="TGS"/>
</dbReference>
<dbReference type="InterPro" id="IPR012676">
    <property type="entry name" value="TGS-like"/>
</dbReference>
<dbReference type="InterPro" id="IPR002320">
    <property type="entry name" value="Thr-tRNA-ligase_IIa"/>
</dbReference>
<dbReference type="InterPro" id="IPR018163">
    <property type="entry name" value="Thr/Ala-tRNA-synth_IIc_edit"/>
</dbReference>
<dbReference type="InterPro" id="IPR047246">
    <property type="entry name" value="ThrRS_anticodon"/>
</dbReference>
<dbReference type="InterPro" id="IPR033728">
    <property type="entry name" value="ThrRS_core"/>
</dbReference>
<dbReference type="InterPro" id="IPR012947">
    <property type="entry name" value="tRNA_SAD"/>
</dbReference>
<dbReference type="NCBIfam" id="TIGR00418">
    <property type="entry name" value="thrS"/>
    <property type="match status" value="1"/>
</dbReference>
<dbReference type="PANTHER" id="PTHR11451:SF44">
    <property type="entry name" value="THREONINE--TRNA LIGASE, CHLOROPLASTIC_MITOCHONDRIAL 2"/>
    <property type="match status" value="1"/>
</dbReference>
<dbReference type="PANTHER" id="PTHR11451">
    <property type="entry name" value="THREONINE-TRNA LIGASE"/>
    <property type="match status" value="1"/>
</dbReference>
<dbReference type="Pfam" id="PF03129">
    <property type="entry name" value="HGTP_anticodon"/>
    <property type="match status" value="1"/>
</dbReference>
<dbReference type="Pfam" id="PF02824">
    <property type="entry name" value="TGS"/>
    <property type="match status" value="1"/>
</dbReference>
<dbReference type="Pfam" id="PF00587">
    <property type="entry name" value="tRNA-synt_2b"/>
    <property type="match status" value="1"/>
</dbReference>
<dbReference type="Pfam" id="PF07973">
    <property type="entry name" value="tRNA_SAD"/>
    <property type="match status" value="1"/>
</dbReference>
<dbReference type="PRINTS" id="PR01047">
    <property type="entry name" value="TRNASYNTHTHR"/>
</dbReference>
<dbReference type="SMART" id="SM00863">
    <property type="entry name" value="tRNA_SAD"/>
    <property type="match status" value="1"/>
</dbReference>
<dbReference type="SUPFAM" id="SSF52954">
    <property type="entry name" value="Class II aaRS ABD-related"/>
    <property type="match status" value="1"/>
</dbReference>
<dbReference type="SUPFAM" id="SSF55681">
    <property type="entry name" value="Class II aaRS and biotin synthetases"/>
    <property type="match status" value="1"/>
</dbReference>
<dbReference type="SUPFAM" id="SSF81271">
    <property type="entry name" value="TGS-like"/>
    <property type="match status" value="1"/>
</dbReference>
<dbReference type="SUPFAM" id="SSF55186">
    <property type="entry name" value="ThrRS/AlaRS common domain"/>
    <property type="match status" value="1"/>
</dbReference>
<dbReference type="PROSITE" id="PS50862">
    <property type="entry name" value="AA_TRNA_LIGASE_II"/>
    <property type="match status" value="1"/>
</dbReference>
<dbReference type="PROSITE" id="PS51880">
    <property type="entry name" value="TGS"/>
    <property type="match status" value="1"/>
</dbReference>
<organism>
    <name type="scientific">Neisseria meningitidis serogroup A / serotype 4A (strain DSM 15465 / Z2491)</name>
    <dbReference type="NCBI Taxonomy" id="122587"/>
    <lineage>
        <taxon>Bacteria</taxon>
        <taxon>Pseudomonadati</taxon>
        <taxon>Pseudomonadota</taxon>
        <taxon>Betaproteobacteria</taxon>
        <taxon>Neisseriales</taxon>
        <taxon>Neisseriaceae</taxon>
        <taxon>Neisseria</taxon>
    </lineage>
</organism>
<sequence>MLNITLPDGSVRQYESPVTVAQIAASIGAGLAKAAVAGRVNGKLVDACDPIVEDSAVQIITPKDQEGIEIIRHSCAHLVGHAVKQLYPNAKMVIGPVIEEGFYYDIATEKPFTPEDVAAIEARMKELIAQDYDVVKIMTPRAEAIKIFQERGEEYKLRLIDDMPEVEAMGMYHHQEYVDMCRGPHVPNTRFLKNFKLTKLAGAYWRGDSNNEMLQRIYGTAWATKDELKAYIQRIEEAEKRDHRKLGKQLDLFHLQDEAPGMVFWHPKGWALWQVIEQHMRKELNAAGYKEVKTPQIMDKTFWEKSGHWENYKDNMFVTSSEKREYAVKPMNCPGHVQIFNNGLRSYRDLPMRLAEFGSCHRNEPSGALHGLMRVRGFVQDDAHIFCTEDQIVSEARAFNELLVRIYKQFGFHDVSVKLSLRPEQRAGSDDVWDKAEQGLREALTACGVEWGELPGEGAFYGPKIEYHVRDALGRSWQCGTLQLDFVLPERLDAEYVTENNDRARPVMLHRAILGSLERFIGILIENHAGSFPLWLAPVQLVIMNITENQADYCREVAAKLQAAGFRVELDLRNEKIGYKIRDNSQYRFPYQIVVGDKEKQENKVAVRRKAEDLGSLDLDDFIAQLQQEITDALVNH</sequence>
<feature type="chain" id="PRO_0000101015" description="Threonine--tRNA ligase">
    <location>
        <begin position="1"/>
        <end position="637"/>
    </location>
</feature>
<feature type="domain" description="TGS" evidence="2">
    <location>
        <begin position="1"/>
        <end position="61"/>
    </location>
</feature>
<feature type="region of interest" description="Catalytic" evidence="1">
    <location>
        <begin position="242"/>
        <end position="533"/>
    </location>
</feature>
<feature type="binding site" evidence="1">
    <location>
        <position position="333"/>
    </location>
    <ligand>
        <name>Zn(2+)</name>
        <dbReference type="ChEBI" id="CHEBI:29105"/>
    </ligand>
</feature>
<feature type="binding site" evidence="1">
    <location>
        <position position="384"/>
    </location>
    <ligand>
        <name>Zn(2+)</name>
        <dbReference type="ChEBI" id="CHEBI:29105"/>
    </ligand>
</feature>
<feature type="binding site" evidence="1">
    <location>
        <position position="510"/>
    </location>
    <ligand>
        <name>Zn(2+)</name>
        <dbReference type="ChEBI" id="CHEBI:29105"/>
    </ligand>
</feature>
<keyword id="KW-0030">Aminoacyl-tRNA synthetase</keyword>
<keyword id="KW-0067">ATP-binding</keyword>
<keyword id="KW-0963">Cytoplasm</keyword>
<keyword id="KW-0436">Ligase</keyword>
<keyword id="KW-0479">Metal-binding</keyword>
<keyword id="KW-0547">Nucleotide-binding</keyword>
<keyword id="KW-0648">Protein biosynthesis</keyword>
<keyword id="KW-0694">RNA-binding</keyword>
<keyword id="KW-0820">tRNA-binding</keyword>
<keyword id="KW-0862">Zinc</keyword>
<protein>
    <recommendedName>
        <fullName evidence="1">Threonine--tRNA ligase</fullName>
        <ecNumber evidence="1">6.1.1.3</ecNumber>
    </recommendedName>
    <alternativeName>
        <fullName evidence="1">Threonyl-tRNA synthetase</fullName>
        <shortName evidence="1">ThrRS</shortName>
    </alternativeName>
</protein>
<reference key="1">
    <citation type="journal article" date="2000" name="Nature">
        <title>Complete DNA sequence of a serogroup A strain of Neisseria meningitidis Z2491.</title>
        <authorList>
            <person name="Parkhill J."/>
            <person name="Achtman M."/>
            <person name="James K.D."/>
            <person name="Bentley S.D."/>
            <person name="Churcher C.M."/>
            <person name="Klee S.R."/>
            <person name="Morelli G."/>
            <person name="Basham D."/>
            <person name="Brown D."/>
            <person name="Chillingworth T."/>
            <person name="Davies R.M."/>
            <person name="Davis P."/>
            <person name="Devlin K."/>
            <person name="Feltwell T."/>
            <person name="Hamlin N."/>
            <person name="Holroyd S."/>
            <person name="Jagels K."/>
            <person name="Leather S."/>
            <person name="Moule S."/>
            <person name="Mungall K.L."/>
            <person name="Quail M.A."/>
            <person name="Rajandream M.A."/>
            <person name="Rutherford K.M."/>
            <person name="Simmonds M."/>
            <person name="Skelton J."/>
            <person name="Whitehead S."/>
            <person name="Spratt B.G."/>
            <person name="Barrell B.G."/>
        </authorList>
    </citation>
    <scope>NUCLEOTIDE SEQUENCE [LARGE SCALE GENOMIC DNA]</scope>
    <source>
        <strain>DSM 15465 / Z2491</strain>
    </source>
</reference>
<comment type="function">
    <text evidence="1">Catalyzes the attachment of threonine to tRNA(Thr) in a two-step reaction: L-threonine is first activated by ATP to form Thr-AMP and then transferred to the acceptor end of tRNA(Thr). Also edits incorrectly charged L-seryl-tRNA(Thr).</text>
</comment>
<comment type="catalytic activity">
    <reaction evidence="1">
        <text>tRNA(Thr) + L-threonine + ATP = L-threonyl-tRNA(Thr) + AMP + diphosphate + H(+)</text>
        <dbReference type="Rhea" id="RHEA:24624"/>
        <dbReference type="Rhea" id="RHEA-COMP:9670"/>
        <dbReference type="Rhea" id="RHEA-COMP:9704"/>
        <dbReference type="ChEBI" id="CHEBI:15378"/>
        <dbReference type="ChEBI" id="CHEBI:30616"/>
        <dbReference type="ChEBI" id="CHEBI:33019"/>
        <dbReference type="ChEBI" id="CHEBI:57926"/>
        <dbReference type="ChEBI" id="CHEBI:78442"/>
        <dbReference type="ChEBI" id="CHEBI:78534"/>
        <dbReference type="ChEBI" id="CHEBI:456215"/>
        <dbReference type="EC" id="6.1.1.3"/>
    </reaction>
</comment>
<comment type="cofactor">
    <cofactor evidence="1">
        <name>Zn(2+)</name>
        <dbReference type="ChEBI" id="CHEBI:29105"/>
    </cofactor>
    <text evidence="1">Binds 1 zinc ion per subunit.</text>
</comment>
<comment type="subunit">
    <text evidence="1">Homodimer.</text>
</comment>
<comment type="subcellular location">
    <subcellularLocation>
        <location evidence="1">Cytoplasm</location>
    </subcellularLocation>
</comment>
<comment type="similarity">
    <text evidence="1">Belongs to the class-II aminoacyl-tRNA synthetase family.</text>
</comment>